<keyword id="KW-0997">Cell inner membrane</keyword>
<keyword id="KW-1003">Cell membrane</keyword>
<keyword id="KW-0407">Ion channel</keyword>
<keyword id="KW-0406">Ion transport</keyword>
<keyword id="KW-0472">Membrane</keyword>
<keyword id="KW-0479">Metal-binding</keyword>
<keyword id="KW-0915">Sodium</keyword>
<keyword id="KW-0812">Transmembrane</keyword>
<keyword id="KW-1133">Transmembrane helix</keyword>
<keyword id="KW-0813">Transport</keyword>
<sequence length="128" mass="13582">MQERFSAVLLVGAGGFAGASARYLIAVALSSFATGFPMATMLVNVLGCFLIGMISELSLTTSLLPSELRLLLATGFCGGFTTFSSYMYEISALLKDGELFYASLYLIGSLVGGMVFLYLGMALARVWS</sequence>
<accession>B4S3Q4</accession>
<proteinExistence type="inferred from homology"/>
<dbReference type="EMBL" id="CP001108">
    <property type="protein sequence ID" value="ACF45250.1"/>
    <property type="molecule type" value="Genomic_DNA"/>
</dbReference>
<dbReference type="RefSeq" id="WP_012504787.1">
    <property type="nucleotide sequence ID" value="NC_011059.1"/>
</dbReference>
<dbReference type="SMR" id="B4S3Q4"/>
<dbReference type="STRING" id="290512.Paes_0191"/>
<dbReference type="KEGG" id="paa:Paes_0191"/>
<dbReference type="eggNOG" id="COG0239">
    <property type="taxonomic scope" value="Bacteria"/>
</dbReference>
<dbReference type="HOGENOM" id="CLU_114342_3_2_10"/>
<dbReference type="Proteomes" id="UP000002725">
    <property type="component" value="Chromosome"/>
</dbReference>
<dbReference type="GO" id="GO:0005886">
    <property type="term" value="C:plasma membrane"/>
    <property type="evidence" value="ECO:0007669"/>
    <property type="project" value="UniProtKB-SubCell"/>
</dbReference>
<dbReference type="GO" id="GO:0062054">
    <property type="term" value="F:fluoride channel activity"/>
    <property type="evidence" value="ECO:0007669"/>
    <property type="project" value="UniProtKB-UniRule"/>
</dbReference>
<dbReference type="GO" id="GO:0046872">
    <property type="term" value="F:metal ion binding"/>
    <property type="evidence" value="ECO:0007669"/>
    <property type="project" value="UniProtKB-KW"/>
</dbReference>
<dbReference type="GO" id="GO:0140114">
    <property type="term" value="P:cellular detoxification of fluoride"/>
    <property type="evidence" value="ECO:0007669"/>
    <property type="project" value="UniProtKB-UniRule"/>
</dbReference>
<dbReference type="HAMAP" id="MF_00454">
    <property type="entry name" value="FluC"/>
    <property type="match status" value="1"/>
</dbReference>
<dbReference type="InterPro" id="IPR003691">
    <property type="entry name" value="FluC"/>
</dbReference>
<dbReference type="NCBIfam" id="TIGR00494">
    <property type="entry name" value="crcB"/>
    <property type="match status" value="1"/>
</dbReference>
<dbReference type="PANTHER" id="PTHR28259">
    <property type="entry name" value="FLUORIDE EXPORT PROTEIN 1-RELATED"/>
    <property type="match status" value="1"/>
</dbReference>
<dbReference type="PANTHER" id="PTHR28259:SF1">
    <property type="entry name" value="FLUORIDE EXPORT PROTEIN 1-RELATED"/>
    <property type="match status" value="1"/>
</dbReference>
<dbReference type="Pfam" id="PF02537">
    <property type="entry name" value="CRCB"/>
    <property type="match status" value="1"/>
</dbReference>
<gene>
    <name evidence="1" type="primary">fluC</name>
    <name evidence="1" type="synonym">crcB</name>
    <name type="ordered locus">Paes_0191</name>
</gene>
<feature type="chain" id="PRO_1000125143" description="Fluoride-specific ion channel FluC">
    <location>
        <begin position="1"/>
        <end position="128"/>
    </location>
</feature>
<feature type="transmembrane region" description="Helical" evidence="1">
    <location>
        <begin position="7"/>
        <end position="27"/>
    </location>
</feature>
<feature type="transmembrane region" description="Helical" evidence="1">
    <location>
        <begin position="34"/>
        <end position="54"/>
    </location>
</feature>
<feature type="transmembrane region" description="Helical" evidence="1">
    <location>
        <begin position="70"/>
        <end position="90"/>
    </location>
</feature>
<feature type="transmembrane region" description="Helical" evidence="1">
    <location>
        <begin position="104"/>
        <end position="124"/>
    </location>
</feature>
<feature type="binding site" evidence="1">
    <location>
        <position position="78"/>
    </location>
    <ligand>
        <name>Na(+)</name>
        <dbReference type="ChEBI" id="CHEBI:29101"/>
        <note>structural</note>
    </ligand>
</feature>
<feature type="binding site" evidence="1">
    <location>
        <position position="81"/>
    </location>
    <ligand>
        <name>Na(+)</name>
        <dbReference type="ChEBI" id="CHEBI:29101"/>
        <note>structural</note>
    </ligand>
</feature>
<protein>
    <recommendedName>
        <fullName evidence="1">Fluoride-specific ion channel FluC</fullName>
    </recommendedName>
</protein>
<organism>
    <name type="scientific">Prosthecochloris aestuarii (strain DSM 271 / SK 413)</name>
    <dbReference type="NCBI Taxonomy" id="290512"/>
    <lineage>
        <taxon>Bacteria</taxon>
        <taxon>Pseudomonadati</taxon>
        <taxon>Chlorobiota</taxon>
        <taxon>Chlorobiia</taxon>
        <taxon>Chlorobiales</taxon>
        <taxon>Chlorobiaceae</taxon>
        <taxon>Prosthecochloris</taxon>
    </lineage>
</organism>
<name>FLUC_PROA2</name>
<evidence type="ECO:0000255" key="1">
    <source>
        <dbReference type="HAMAP-Rule" id="MF_00454"/>
    </source>
</evidence>
<reference key="1">
    <citation type="submission" date="2008-06" db="EMBL/GenBank/DDBJ databases">
        <title>Complete sequence of chromosome of Prosthecochloris aestuarii DSM 271.</title>
        <authorList>
            <consortium name="US DOE Joint Genome Institute"/>
            <person name="Lucas S."/>
            <person name="Copeland A."/>
            <person name="Lapidus A."/>
            <person name="Glavina del Rio T."/>
            <person name="Dalin E."/>
            <person name="Tice H."/>
            <person name="Bruce D."/>
            <person name="Goodwin L."/>
            <person name="Pitluck S."/>
            <person name="Schmutz J."/>
            <person name="Larimer F."/>
            <person name="Land M."/>
            <person name="Hauser L."/>
            <person name="Kyrpides N."/>
            <person name="Anderson I."/>
            <person name="Liu Z."/>
            <person name="Li T."/>
            <person name="Zhao F."/>
            <person name="Overmann J."/>
            <person name="Bryant D.A."/>
            <person name="Richardson P."/>
        </authorList>
    </citation>
    <scope>NUCLEOTIDE SEQUENCE [LARGE SCALE GENOMIC DNA]</scope>
    <source>
        <strain>DSM 271 / SK 413</strain>
    </source>
</reference>
<comment type="function">
    <text evidence="1">Fluoride-specific ion channel. Important for reducing fluoride concentration in the cell, thus reducing its toxicity.</text>
</comment>
<comment type="catalytic activity">
    <reaction evidence="1">
        <text>fluoride(in) = fluoride(out)</text>
        <dbReference type="Rhea" id="RHEA:76159"/>
        <dbReference type="ChEBI" id="CHEBI:17051"/>
    </reaction>
    <physiologicalReaction direction="left-to-right" evidence="1">
        <dbReference type="Rhea" id="RHEA:76160"/>
    </physiologicalReaction>
</comment>
<comment type="activity regulation">
    <text evidence="1">Na(+) is not transported, but it plays an essential structural role and its presence is essential for fluoride channel function.</text>
</comment>
<comment type="subcellular location">
    <subcellularLocation>
        <location evidence="1">Cell inner membrane</location>
        <topology evidence="1">Multi-pass membrane protein</topology>
    </subcellularLocation>
</comment>
<comment type="similarity">
    <text evidence="1">Belongs to the fluoride channel Fluc/FEX (TC 1.A.43) family.</text>
</comment>